<comment type="function">
    <text evidence="1">Binds directly to 23S ribosomal RNA and is necessary for the in vitro assembly process of the 50S ribosomal subunit. It is not involved in the protein synthesizing functions of that subunit.</text>
</comment>
<comment type="similarity">
    <text evidence="1">Belongs to the bacterial ribosomal protein bL20 family.</text>
</comment>
<sequence>MARVKTGVVRRRRHKKVLKLARGFYSGRRKHFRKAKEQLERSLVYAYRDRRRKKRDFRRLWIVRINAACRLNDISYSKFINGLKKAGIELDRKILADLAMNDAAAFAKIADAAKKAL</sequence>
<keyword id="KW-1185">Reference proteome</keyword>
<keyword id="KW-0687">Ribonucleoprotein</keyword>
<keyword id="KW-0689">Ribosomal protein</keyword>
<keyword id="KW-0694">RNA-binding</keyword>
<keyword id="KW-0699">rRNA-binding</keyword>
<organism>
    <name type="scientific">Campylobacter lari (strain RM2100 / D67 / ATCC BAA-1060)</name>
    <dbReference type="NCBI Taxonomy" id="306263"/>
    <lineage>
        <taxon>Bacteria</taxon>
        <taxon>Pseudomonadati</taxon>
        <taxon>Campylobacterota</taxon>
        <taxon>Epsilonproteobacteria</taxon>
        <taxon>Campylobacterales</taxon>
        <taxon>Campylobacteraceae</taxon>
        <taxon>Campylobacter</taxon>
    </lineage>
</organism>
<feature type="chain" id="PRO_1000193945" description="Large ribosomal subunit protein bL20">
    <location>
        <begin position="1"/>
        <end position="117"/>
    </location>
</feature>
<reference key="1">
    <citation type="journal article" date="2008" name="Foodborne Pathog. Dis.">
        <title>The complete genome sequence and analysis of the human pathogen Campylobacter lari.</title>
        <authorList>
            <person name="Miller W.G."/>
            <person name="Wang G."/>
            <person name="Binnewies T.T."/>
            <person name="Parker C.T."/>
        </authorList>
    </citation>
    <scope>NUCLEOTIDE SEQUENCE [LARGE SCALE GENOMIC DNA]</scope>
    <source>
        <strain>RM2100 / D67 / ATCC BAA-1060</strain>
    </source>
</reference>
<name>RL20_CAMLR</name>
<dbReference type="EMBL" id="CP000932">
    <property type="protein sequence ID" value="ACM63403.1"/>
    <property type="molecule type" value="Genomic_DNA"/>
</dbReference>
<dbReference type="RefSeq" id="WP_012660789.1">
    <property type="nucleotide sequence ID" value="NC_012039.1"/>
</dbReference>
<dbReference type="SMR" id="B9KEB8"/>
<dbReference type="STRING" id="306263.Cla_0035"/>
<dbReference type="KEGG" id="cla:CLA_0035"/>
<dbReference type="PATRIC" id="fig|306263.5.peg.36"/>
<dbReference type="eggNOG" id="COG0292">
    <property type="taxonomic scope" value="Bacteria"/>
</dbReference>
<dbReference type="HOGENOM" id="CLU_123265_0_1_7"/>
<dbReference type="Proteomes" id="UP000007727">
    <property type="component" value="Chromosome"/>
</dbReference>
<dbReference type="GO" id="GO:1990904">
    <property type="term" value="C:ribonucleoprotein complex"/>
    <property type="evidence" value="ECO:0007669"/>
    <property type="project" value="UniProtKB-KW"/>
</dbReference>
<dbReference type="GO" id="GO:0005840">
    <property type="term" value="C:ribosome"/>
    <property type="evidence" value="ECO:0007669"/>
    <property type="project" value="UniProtKB-KW"/>
</dbReference>
<dbReference type="GO" id="GO:0019843">
    <property type="term" value="F:rRNA binding"/>
    <property type="evidence" value="ECO:0007669"/>
    <property type="project" value="UniProtKB-UniRule"/>
</dbReference>
<dbReference type="GO" id="GO:0003735">
    <property type="term" value="F:structural constituent of ribosome"/>
    <property type="evidence" value="ECO:0007669"/>
    <property type="project" value="InterPro"/>
</dbReference>
<dbReference type="GO" id="GO:0000027">
    <property type="term" value="P:ribosomal large subunit assembly"/>
    <property type="evidence" value="ECO:0007669"/>
    <property type="project" value="UniProtKB-UniRule"/>
</dbReference>
<dbReference type="GO" id="GO:0006412">
    <property type="term" value="P:translation"/>
    <property type="evidence" value="ECO:0007669"/>
    <property type="project" value="InterPro"/>
</dbReference>
<dbReference type="CDD" id="cd07026">
    <property type="entry name" value="Ribosomal_L20"/>
    <property type="match status" value="1"/>
</dbReference>
<dbReference type="FunFam" id="1.10.1900.20:FF:000001">
    <property type="entry name" value="50S ribosomal protein L20"/>
    <property type="match status" value="1"/>
</dbReference>
<dbReference type="Gene3D" id="6.10.160.10">
    <property type="match status" value="1"/>
</dbReference>
<dbReference type="Gene3D" id="1.10.1900.20">
    <property type="entry name" value="Ribosomal protein L20"/>
    <property type="match status" value="1"/>
</dbReference>
<dbReference type="HAMAP" id="MF_00382">
    <property type="entry name" value="Ribosomal_bL20"/>
    <property type="match status" value="1"/>
</dbReference>
<dbReference type="InterPro" id="IPR005813">
    <property type="entry name" value="Ribosomal_bL20"/>
</dbReference>
<dbReference type="InterPro" id="IPR049946">
    <property type="entry name" value="RIBOSOMAL_L20_CS"/>
</dbReference>
<dbReference type="InterPro" id="IPR035566">
    <property type="entry name" value="Ribosomal_protein_bL20_C"/>
</dbReference>
<dbReference type="NCBIfam" id="TIGR01032">
    <property type="entry name" value="rplT_bact"/>
    <property type="match status" value="1"/>
</dbReference>
<dbReference type="PANTHER" id="PTHR10986">
    <property type="entry name" value="39S RIBOSOMAL PROTEIN L20"/>
    <property type="match status" value="1"/>
</dbReference>
<dbReference type="Pfam" id="PF00453">
    <property type="entry name" value="Ribosomal_L20"/>
    <property type="match status" value="1"/>
</dbReference>
<dbReference type="PRINTS" id="PR00062">
    <property type="entry name" value="RIBOSOMALL20"/>
</dbReference>
<dbReference type="SUPFAM" id="SSF74731">
    <property type="entry name" value="Ribosomal protein L20"/>
    <property type="match status" value="1"/>
</dbReference>
<dbReference type="PROSITE" id="PS00937">
    <property type="entry name" value="RIBOSOMAL_L20"/>
    <property type="match status" value="1"/>
</dbReference>
<gene>
    <name evidence="1" type="primary">rplT</name>
    <name type="ordered locus">Cla_0035</name>
</gene>
<accession>B9KEB8</accession>
<proteinExistence type="inferred from homology"/>
<evidence type="ECO:0000255" key="1">
    <source>
        <dbReference type="HAMAP-Rule" id="MF_00382"/>
    </source>
</evidence>
<evidence type="ECO:0000305" key="2"/>
<protein>
    <recommendedName>
        <fullName evidence="1">Large ribosomal subunit protein bL20</fullName>
    </recommendedName>
    <alternativeName>
        <fullName evidence="2">50S ribosomal protein L20</fullName>
    </alternativeName>
</protein>